<dbReference type="EC" id="1.14.14.26" evidence="1"/>
<dbReference type="EC" id="1.14.14.23" evidence="4 5"/>
<dbReference type="EMBL" id="J05509">
    <property type="protein sequence ID" value="AAA40839.1"/>
    <property type="molecule type" value="mRNA"/>
</dbReference>
<dbReference type="EMBL" id="J02926">
    <property type="protein sequence ID" value="AAA40923.1"/>
    <property type="molecule type" value="Genomic_DNA"/>
</dbReference>
<dbReference type="EMBL" id="J05430">
    <property type="protein sequence ID" value="AAA41041.1"/>
    <property type="molecule type" value="mRNA"/>
</dbReference>
<dbReference type="EMBL" id="J05460">
    <property type="protein sequence ID" value="AAA03649.1"/>
    <property type="molecule type" value="mRNA"/>
</dbReference>
<dbReference type="EMBL" id="M59189">
    <property type="protein sequence ID" value="AAA41042.1"/>
    <property type="molecule type" value="Genomic_DNA"/>
</dbReference>
<dbReference type="EMBL" id="M59184">
    <property type="protein sequence ID" value="AAA41042.1"/>
    <property type="status" value="JOINED"/>
    <property type="molecule type" value="Genomic_DNA"/>
</dbReference>
<dbReference type="EMBL" id="M59185">
    <property type="protein sequence ID" value="AAA41042.1"/>
    <property type="status" value="JOINED"/>
    <property type="molecule type" value="Genomic_DNA"/>
</dbReference>
<dbReference type="EMBL" id="M59186">
    <property type="protein sequence ID" value="AAA41042.1"/>
    <property type="status" value="JOINED"/>
    <property type="molecule type" value="Genomic_DNA"/>
</dbReference>
<dbReference type="EMBL" id="M59187">
    <property type="protein sequence ID" value="AAA41042.1"/>
    <property type="status" value="JOINED"/>
    <property type="molecule type" value="Genomic_DNA"/>
</dbReference>
<dbReference type="EMBL" id="M59188">
    <property type="protein sequence ID" value="AAA41042.1"/>
    <property type="status" value="JOINED"/>
    <property type="molecule type" value="Genomic_DNA"/>
</dbReference>
<dbReference type="EMBL" id="U01962">
    <property type="protein sequence ID" value="AAA21144.2"/>
    <property type="molecule type" value="Genomic_DNA"/>
</dbReference>
<dbReference type="EMBL" id="X17595">
    <property type="protein sequence ID" value="CAB57878.1"/>
    <property type="molecule type" value="mRNA"/>
</dbReference>
<dbReference type="EMBL" id="Z14108">
    <property type="protein sequence ID" value="CAA78481.1"/>
    <property type="molecule type" value="Genomic_DNA"/>
</dbReference>
<dbReference type="PIR" id="A35376">
    <property type="entry name" value="A35376"/>
</dbReference>
<dbReference type="RefSeq" id="NP_037074.1">
    <property type="nucleotide sequence ID" value="NM_012942.2"/>
</dbReference>
<dbReference type="SMR" id="P18125"/>
<dbReference type="FunCoup" id="P18125">
    <property type="interactions" value="106"/>
</dbReference>
<dbReference type="STRING" id="10116.ENSRNOP00000012819"/>
<dbReference type="BindingDB" id="P18125"/>
<dbReference type="ChEMBL" id="CHEMBL2339"/>
<dbReference type="DrugCentral" id="P18125"/>
<dbReference type="SwissLipids" id="SLP:000001323"/>
<dbReference type="PhosphoSitePlus" id="P18125"/>
<dbReference type="PaxDb" id="10116-ENSRNOP00000012819"/>
<dbReference type="Ensembl" id="ENSRNOT00000012819.5">
    <property type="protein sequence ID" value="ENSRNOP00000012819.2"/>
    <property type="gene ID" value="ENSRNOG00000009488.5"/>
</dbReference>
<dbReference type="GeneID" id="25428"/>
<dbReference type="KEGG" id="rno:25428"/>
<dbReference type="UCSC" id="RGD:2482">
    <property type="organism name" value="rat"/>
</dbReference>
<dbReference type="AGR" id="RGD:2482"/>
<dbReference type="CTD" id="1581"/>
<dbReference type="RGD" id="2482">
    <property type="gene designation" value="Cyp7a1"/>
</dbReference>
<dbReference type="eggNOG" id="KOG0684">
    <property type="taxonomic scope" value="Eukaryota"/>
</dbReference>
<dbReference type="GeneTree" id="ENSGT00940000153141"/>
<dbReference type="HOGENOM" id="CLU_018012_1_3_1"/>
<dbReference type="InParanoid" id="P18125"/>
<dbReference type="OMA" id="MFRTAHN"/>
<dbReference type="OrthoDB" id="6692864at2759"/>
<dbReference type="PhylomeDB" id="P18125"/>
<dbReference type="TreeFam" id="TF105090"/>
<dbReference type="BioCyc" id="MetaCyc:MONOMER-14293"/>
<dbReference type="BRENDA" id="1.14.14.23">
    <property type="organism ID" value="5301"/>
</dbReference>
<dbReference type="Reactome" id="R-RNO-192105">
    <property type="pathway name" value="Synthesis of bile acids and bile salts"/>
</dbReference>
<dbReference type="Reactome" id="R-RNO-193368">
    <property type="pathway name" value="Synthesis of bile acids and bile salts via 7alpha-hydroxycholesterol"/>
</dbReference>
<dbReference type="Reactome" id="R-RNO-193807">
    <property type="pathway name" value="Synthesis of bile acids and bile salts via 27-hydroxycholesterol"/>
</dbReference>
<dbReference type="Reactome" id="R-RNO-211976">
    <property type="pathway name" value="Endogenous sterols"/>
</dbReference>
<dbReference type="SABIO-RK" id="P18125"/>
<dbReference type="UniPathway" id="UPA00221"/>
<dbReference type="UniPathway" id="UPA01058"/>
<dbReference type="PRO" id="PR:P18125"/>
<dbReference type="Proteomes" id="UP000002494">
    <property type="component" value="Chromosome 5"/>
</dbReference>
<dbReference type="Bgee" id="ENSRNOG00000009488">
    <property type="expression patterns" value="Expressed in liver"/>
</dbReference>
<dbReference type="GO" id="GO:0005789">
    <property type="term" value="C:endoplasmic reticulum membrane"/>
    <property type="evidence" value="ECO:0007669"/>
    <property type="project" value="UniProtKB-SubCell"/>
</dbReference>
<dbReference type="GO" id="GO:0043231">
    <property type="term" value="C:intracellular membrane-bounded organelle"/>
    <property type="evidence" value="ECO:0000314"/>
    <property type="project" value="UniProtKB"/>
</dbReference>
<dbReference type="GO" id="GO:0033782">
    <property type="term" value="F:24S-hydroxycholesterol 7-alpha-hydroxylase activity"/>
    <property type="evidence" value="ECO:0007669"/>
    <property type="project" value="UniProtKB-EC"/>
</dbReference>
<dbReference type="GO" id="GO:0008123">
    <property type="term" value="F:cholesterol 7-alpha-monooxygenase activity"/>
    <property type="evidence" value="ECO:0000314"/>
    <property type="project" value="UniProtKB"/>
</dbReference>
<dbReference type="GO" id="GO:0020037">
    <property type="term" value="F:heme binding"/>
    <property type="evidence" value="ECO:0007669"/>
    <property type="project" value="InterPro"/>
</dbReference>
<dbReference type="GO" id="GO:0005506">
    <property type="term" value="F:iron ion binding"/>
    <property type="evidence" value="ECO:0007669"/>
    <property type="project" value="InterPro"/>
</dbReference>
<dbReference type="GO" id="GO:0006699">
    <property type="term" value="P:bile acid biosynthetic process"/>
    <property type="evidence" value="ECO:0000314"/>
    <property type="project" value="UniProtKB"/>
</dbReference>
<dbReference type="GO" id="GO:0071397">
    <property type="term" value="P:cellular response to cholesterol"/>
    <property type="evidence" value="ECO:0000314"/>
    <property type="project" value="UniProtKB"/>
</dbReference>
<dbReference type="GO" id="GO:0071333">
    <property type="term" value="P:cellular response to glucose stimulus"/>
    <property type="evidence" value="ECO:0000250"/>
    <property type="project" value="UniProtKB"/>
</dbReference>
<dbReference type="GO" id="GO:0006707">
    <property type="term" value="P:cholesterol catabolic process"/>
    <property type="evidence" value="ECO:0000314"/>
    <property type="project" value="UniProtKB"/>
</dbReference>
<dbReference type="GO" id="GO:0042632">
    <property type="term" value="P:cholesterol homeostasis"/>
    <property type="evidence" value="ECO:0000314"/>
    <property type="project" value="UniProtKB"/>
</dbReference>
<dbReference type="GO" id="GO:0032966">
    <property type="term" value="P:negative regulation of collagen biosynthetic process"/>
    <property type="evidence" value="ECO:0000315"/>
    <property type="project" value="RGD"/>
</dbReference>
<dbReference type="GO" id="GO:0045717">
    <property type="term" value="P:negative regulation of fatty acid biosynthetic process"/>
    <property type="evidence" value="ECO:0000314"/>
    <property type="project" value="BHF-UCL"/>
</dbReference>
<dbReference type="GO" id="GO:0045542">
    <property type="term" value="P:positive regulation of cholesterol biosynthetic process"/>
    <property type="evidence" value="ECO:0000314"/>
    <property type="project" value="BHF-UCL"/>
</dbReference>
<dbReference type="GO" id="GO:0070857">
    <property type="term" value="P:regulation of bile acid biosynthetic process"/>
    <property type="evidence" value="ECO:0000314"/>
    <property type="project" value="UniProtKB"/>
</dbReference>
<dbReference type="GO" id="GO:0045471">
    <property type="term" value="P:response to ethanol"/>
    <property type="evidence" value="ECO:0000270"/>
    <property type="project" value="RGD"/>
</dbReference>
<dbReference type="CDD" id="cd20631">
    <property type="entry name" value="CYP7A1"/>
    <property type="match status" value="1"/>
</dbReference>
<dbReference type="FunFam" id="1.10.630.10:FF:000034">
    <property type="entry name" value="Cholesterol 7-alpha-monooxygenase"/>
    <property type="match status" value="1"/>
</dbReference>
<dbReference type="Gene3D" id="1.10.630.10">
    <property type="entry name" value="Cytochrome P450"/>
    <property type="match status" value="1"/>
</dbReference>
<dbReference type="InterPro" id="IPR030681">
    <property type="entry name" value="Cholesterol_7a_monooxygenase"/>
</dbReference>
<dbReference type="InterPro" id="IPR050529">
    <property type="entry name" value="CYP450_sterol_14alpha_dmase"/>
</dbReference>
<dbReference type="InterPro" id="IPR001128">
    <property type="entry name" value="Cyt_P450"/>
</dbReference>
<dbReference type="InterPro" id="IPR017972">
    <property type="entry name" value="Cyt_P450_CS"/>
</dbReference>
<dbReference type="InterPro" id="IPR024204">
    <property type="entry name" value="Cyt_P450_CYP7A1-type"/>
</dbReference>
<dbReference type="InterPro" id="IPR002403">
    <property type="entry name" value="Cyt_P450_E_grp-IV"/>
</dbReference>
<dbReference type="InterPro" id="IPR036396">
    <property type="entry name" value="Cyt_P450_sf"/>
</dbReference>
<dbReference type="PANTHER" id="PTHR24304:SF1">
    <property type="entry name" value="CYTOCHROME P450 7A1"/>
    <property type="match status" value="1"/>
</dbReference>
<dbReference type="PANTHER" id="PTHR24304">
    <property type="entry name" value="CYTOCHROME P450 FAMILY 7"/>
    <property type="match status" value="1"/>
</dbReference>
<dbReference type="Pfam" id="PF00067">
    <property type="entry name" value="p450"/>
    <property type="match status" value="1"/>
</dbReference>
<dbReference type="PIRSF" id="PIRSF500625">
    <property type="entry name" value="Cytochrome_CYP7A1"/>
    <property type="match status" value="1"/>
</dbReference>
<dbReference type="PIRSF" id="PIRSF000047">
    <property type="entry name" value="Cytochrome_CYPVIIA1"/>
    <property type="match status" value="1"/>
</dbReference>
<dbReference type="PRINTS" id="PR00465">
    <property type="entry name" value="EP450IV"/>
</dbReference>
<dbReference type="SUPFAM" id="SSF48264">
    <property type="entry name" value="Cytochrome P450"/>
    <property type="match status" value="1"/>
</dbReference>
<dbReference type="PROSITE" id="PS00086">
    <property type="entry name" value="CYTOCHROME_P450"/>
    <property type="match status" value="1"/>
</dbReference>
<sequence length="503" mass="56883">MMTISLIWGIAVLVSCCIWFIVGIRRRKAGEPPLENGLIPYLGCALKFGSNPLEFLRANQRKHGHVFTCKLMGKYVHFITNSLSYHKVLCHGKYFDWKKFHYTTSAKAFGHRSIDPNDGNTTENINNTFTKTLQGDALCSLSEAMMQNLQSVMRPPGLPKSKSNAWVTEGMYAFCYRVMFEAGYLTLFGRDISKTDTQKALILNNLDNFKQFDQVFPALVAGLPIHLFKTAHKAREKLAEGLKHKNLCVRDQVSELIRLRMFLNDTLSTFDDMEKAKTHLAILWASQANTIPATFWSLFQMIRSPEAMKAASEEVSGALQSAGQELSSGGSAIYLDQVQLNDLPVLDSIIKEALRLSSASLNIRTAKEDFTLHLEDGSYNIRKDDMIALYPQLMHLDPEIYPDPLTFKYDRYLDESGKAKTTFYSNGNKLKCFYMPFGSGATICPGRLFAVQEIKQFLILMLSCFELEFVESQVKCPPLDQSRAGLGILPPLHDIEFKYKLKH</sequence>
<keyword id="KW-0153">Cholesterol metabolism</keyword>
<keyword id="KW-0903">Direct protein sequencing</keyword>
<keyword id="KW-0256">Endoplasmic reticulum</keyword>
<keyword id="KW-0349">Heme</keyword>
<keyword id="KW-0408">Iron</keyword>
<keyword id="KW-0443">Lipid metabolism</keyword>
<keyword id="KW-0472">Membrane</keyword>
<keyword id="KW-0479">Metal-binding</keyword>
<keyword id="KW-0492">Microsome</keyword>
<keyword id="KW-0503">Monooxygenase</keyword>
<keyword id="KW-0560">Oxidoreductase</keyword>
<keyword id="KW-1185">Reference proteome</keyword>
<keyword id="KW-0753">Steroid metabolism</keyword>
<keyword id="KW-1207">Sterol metabolism</keyword>
<keyword id="KW-0812">Transmembrane</keyword>
<keyword id="KW-1133">Transmembrane helix</keyword>
<name>CP7A1_RAT</name>
<proteinExistence type="evidence at protein level"/>
<organism>
    <name type="scientific">Rattus norvegicus</name>
    <name type="common">Rat</name>
    <dbReference type="NCBI Taxonomy" id="10116"/>
    <lineage>
        <taxon>Eukaryota</taxon>
        <taxon>Metazoa</taxon>
        <taxon>Chordata</taxon>
        <taxon>Craniata</taxon>
        <taxon>Vertebrata</taxon>
        <taxon>Euteleostomi</taxon>
        <taxon>Mammalia</taxon>
        <taxon>Eutheria</taxon>
        <taxon>Euarchontoglires</taxon>
        <taxon>Glires</taxon>
        <taxon>Rodentia</taxon>
        <taxon>Myomorpha</taxon>
        <taxon>Muroidea</taxon>
        <taxon>Muridae</taxon>
        <taxon>Murinae</taxon>
        <taxon>Rattus</taxon>
    </lineage>
</organism>
<accession>P18125</accession>
<accession>P51543</accession>
<evidence type="ECO:0000250" key="1">
    <source>
        <dbReference type="UniProtKB" id="P22680"/>
    </source>
</evidence>
<evidence type="ECO:0000255" key="2"/>
<evidence type="ECO:0000269" key="3">
    <source>
    </source>
</evidence>
<evidence type="ECO:0000269" key="4">
    <source>
    </source>
</evidence>
<evidence type="ECO:0000269" key="5">
    <source>
    </source>
</evidence>
<evidence type="ECO:0000303" key="6">
    <source>
    </source>
</evidence>
<evidence type="ECO:0000305" key="7"/>
<evidence type="ECO:0000305" key="8">
    <source>
    </source>
</evidence>
<evidence type="ECO:0000305" key="9">
    <source>
    </source>
</evidence>
<comment type="function">
    <text evidence="1 4 5">A cytochrome P450 monooxygenase involved in the metabolism of endogenous cholesterol and its oxygenated derivatives (oxysterols) (PubMed:1694852, PubMed:2335522). Mechanistically, uses molecular oxygen inserting one oxygen atom into a substrate, and reducing the second into a water molecule, with two electrons provided by NADPH via cytochrome P450 reductase (CPR; NADPH-ferrihemoprotein reductase) (PubMed:1694852, PubMed:2335522). Functions as a critical regulatory enzyme of bile acid biosynthesis and cholesterol homeostasis. Catalyzes the hydroxylation of carbon hydrogen bond at 7-alpha position of cholesterol, a rate-limiting step in cholesterol catabolism and bile acid biosynthesis (PubMed:1694852, PubMed:2335522). 7-alpha hydroxylates several oxysterols, including 4beta-hydroxycholesterol and 24-hydroxycholesterol. Catalyzes the oxidation of the 7,8 double bond of 7-dehydrocholesterol and lathosterol with direct and predominant formation of the 7-keto derivatives (By similarity).</text>
</comment>
<comment type="catalytic activity">
    <reaction evidence="4 5">
        <text>cholesterol + reduced [NADPH--hemoprotein reductase] + O2 = 7alpha-hydroxycholesterol + oxidized [NADPH--hemoprotein reductase] + H2O + H(+)</text>
        <dbReference type="Rhea" id="RHEA:21812"/>
        <dbReference type="Rhea" id="RHEA-COMP:11964"/>
        <dbReference type="Rhea" id="RHEA-COMP:11965"/>
        <dbReference type="ChEBI" id="CHEBI:15377"/>
        <dbReference type="ChEBI" id="CHEBI:15378"/>
        <dbReference type="ChEBI" id="CHEBI:15379"/>
        <dbReference type="ChEBI" id="CHEBI:16113"/>
        <dbReference type="ChEBI" id="CHEBI:17500"/>
        <dbReference type="ChEBI" id="CHEBI:57618"/>
        <dbReference type="ChEBI" id="CHEBI:58210"/>
        <dbReference type="EC" id="1.14.14.23"/>
    </reaction>
    <physiologicalReaction direction="left-to-right" evidence="8 9">
        <dbReference type="Rhea" id="RHEA:21813"/>
    </physiologicalReaction>
</comment>
<comment type="catalytic activity">
    <reaction evidence="1">
        <text>4beta-hydroxycholesterol + reduced [NADPH--hemoprotein reductase] + O2 = 4beta,7alpha-dihydroxycholesterol + oxidized [NADPH--hemoprotein reductase] + H2O + H(+)</text>
        <dbReference type="Rhea" id="RHEA:46120"/>
        <dbReference type="Rhea" id="RHEA-COMP:11964"/>
        <dbReference type="Rhea" id="RHEA-COMP:11965"/>
        <dbReference type="ChEBI" id="CHEBI:15377"/>
        <dbReference type="ChEBI" id="CHEBI:15378"/>
        <dbReference type="ChEBI" id="CHEBI:15379"/>
        <dbReference type="ChEBI" id="CHEBI:57618"/>
        <dbReference type="ChEBI" id="CHEBI:58210"/>
        <dbReference type="ChEBI" id="CHEBI:85778"/>
        <dbReference type="ChEBI" id="CHEBI:85779"/>
    </reaction>
    <physiologicalReaction direction="left-to-right" evidence="1">
        <dbReference type="Rhea" id="RHEA:46121"/>
    </physiologicalReaction>
</comment>
<comment type="catalytic activity">
    <reaction evidence="1">
        <text>lathosterol + reduced [NADPH--hemoprotein reductase] + O2 = 7alpha,8alpha-epoxy-5alpha-cholestan-3beta-ol + oxidized [NADPH--hemoprotein reductase] + H2O + H(+)</text>
        <dbReference type="Rhea" id="RHEA:53256"/>
        <dbReference type="Rhea" id="RHEA-COMP:11964"/>
        <dbReference type="Rhea" id="RHEA-COMP:11965"/>
        <dbReference type="ChEBI" id="CHEBI:15377"/>
        <dbReference type="ChEBI" id="CHEBI:15378"/>
        <dbReference type="ChEBI" id="CHEBI:15379"/>
        <dbReference type="ChEBI" id="CHEBI:17168"/>
        <dbReference type="ChEBI" id="CHEBI:57618"/>
        <dbReference type="ChEBI" id="CHEBI:58210"/>
        <dbReference type="ChEBI" id="CHEBI:137063"/>
    </reaction>
    <physiologicalReaction direction="left-to-right" evidence="1">
        <dbReference type="Rhea" id="RHEA:53257"/>
    </physiologicalReaction>
</comment>
<comment type="catalytic activity">
    <reaction evidence="1">
        <text>lathosterol + reduced [NADPH--hemoprotein reductase] + O2 = 5alpha-cholestan-7-oxo-3beta-ol + oxidized [NADPH--hemoprotein reductase] + H2O + H(+)</text>
        <dbReference type="Rhea" id="RHEA:53252"/>
        <dbReference type="Rhea" id="RHEA-COMP:11964"/>
        <dbReference type="Rhea" id="RHEA-COMP:11965"/>
        <dbReference type="ChEBI" id="CHEBI:15377"/>
        <dbReference type="ChEBI" id="CHEBI:15378"/>
        <dbReference type="ChEBI" id="CHEBI:15379"/>
        <dbReference type="ChEBI" id="CHEBI:17168"/>
        <dbReference type="ChEBI" id="CHEBI:57618"/>
        <dbReference type="ChEBI" id="CHEBI:58210"/>
        <dbReference type="ChEBI" id="CHEBI:137062"/>
    </reaction>
    <physiologicalReaction direction="left-to-right" evidence="1">
        <dbReference type="Rhea" id="RHEA:53253"/>
    </physiologicalReaction>
</comment>
<comment type="catalytic activity">
    <reaction evidence="1">
        <text>7-dehydrocholesterol + reduced [NADPH--hemoprotein reductase] + O2 = 7-oxocholesterol + oxidized [NADPH--hemoprotein reductase] + H2O + H(+)</text>
        <dbReference type="Rhea" id="RHEA:53248"/>
        <dbReference type="Rhea" id="RHEA-COMP:11964"/>
        <dbReference type="Rhea" id="RHEA-COMP:11965"/>
        <dbReference type="ChEBI" id="CHEBI:15377"/>
        <dbReference type="ChEBI" id="CHEBI:15378"/>
        <dbReference type="ChEBI" id="CHEBI:15379"/>
        <dbReference type="ChEBI" id="CHEBI:17759"/>
        <dbReference type="ChEBI" id="CHEBI:57618"/>
        <dbReference type="ChEBI" id="CHEBI:58210"/>
        <dbReference type="ChEBI" id="CHEBI:64294"/>
    </reaction>
    <physiologicalReaction direction="left-to-right" evidence="1">
        <dbReference type="Rhea" id="RHEA:53249"/>
    </physiologicalReaction>
</comment>
<comment type="catalytic activity">
    <reaction evidence="1">
        <text>(24S)-hydroxycholesterol + reduced [NADPH--hemoprotein reductase] + O2 = (24S)-7alpha-dihydroxycholesterol + oxidized [NADPH--hemoprotein reductase] + H2O + H(+)</text>
        <dbReference type="Rhea" id="RHEA:46124"/>
        <dbReference type="Rhea" id="RHEA-COMP:11964"/>
        <dbReference type="Rhea" id="RHEA-COMP:11965"/>
        <dbReference type="ChEBI" id="CHEBI:15377"/>
        <dbReference type="ChEBI" id="CHEBI:15378"/>
        <dbReference type="ChEBI" id="CHEBI:15379"/>
        <dbReference type="ChEBI" id="CHEBI:34310"/>
        <dbReference type="ChEBI" id="CHEBI:37640"/>
        <dbReference type="ChEBI" id="CHEBI:57618"/>
        <dbReference type="ChEBI" id="CHEBI:58210"/>
        <dbReference type="EC" id="1.14.14.26"/>
    </reaction>
    <physiologicalReaction direction="left-to-right" evidence="1">
        <dbReference type="Rhea" id="RHEA:46125"/>
    </physiologicalReaction>
</comment>
<comment type="catalytic activity">
    <reaction evidence="1">
        <text>(24R)-hydroxycholesterol + reduced [NADPH--hemoprotein reductase] + O2 = (24R)-7alpha-dihydroxycholesterol + oxidized [NADPH--hemoprotein reductase] + H2O + H(+)</text>
        <dbReference type="Rhea" id="RHEA:16093"/>
        <dbReference type="Rhea" id="RHEA-COMP:11964"/>
        <dbReference type="Rhea" id="RHEA-COMP:11965"/>
        <dbReference type="ChEBI" id="CHEBI:15377"/>
        <dbReference type="ChEBI" id="CHEBI:15378"/>
        <dbReference type="ChEBI" id="CHEBI:15379"/>
        <dbReference type="ChEBI" id="CHEBI:50516"/>
        <dbReference type="ChEBI" id="CHEBI:50518"/>
        <dbReference type="ChEBI" id="CHEBI:57618"/>
        <dbReference type="ChEBI" id="CHEBI:58210"/>
    </reaction>
    <physiologicalReaction direction="left-to-right" evidence="1">
        <dbReference type="Rhea" id="RHEA:16094"/>
    </physiologicalReaction>
</comment>
<comment type="cofactor">
    <cofactor evidence="1">
        <name>heme</name>
        <dbReference type="ChEBI" id="CHEBI:30413"/>
    </cofactor>
</comment>
<comment type="pathway">
    <text evidence="8 9">Lipid metabolism; bile acid biosynthesis.</text>
</comment>
<comment type="pathway">
    <text evidence="8 9">Steroid metabolism; cholesterol degradation.</text>
</comment>
<comment type="subcellular location">
    <subcellularLocation>
        <location evidence="8">Endoplasmic reticulum membrane</location>
        <topology evidence="7">Single-pass membrane protein</topology>
    </subcellularLocation>
    <subcellularLocation>
        <location evidence="8">Microsome membrane</location>
        <topology evidence="7">Single-pass membrane protein</topology>
    </subcellularLocation>
</comment>
<comment type="tissue specificity">
    <text evidence="4 5">Detected in liver (at protein level). Liver.</text>
</comment>
<comment type="induction">
    <text evidence="3 4 5">Up-regulated by dietary cholesterol and cholestyramine. Down-regulated by dietary bile acids, such as chenodeoxycholic acid and cholic acid.</text>
</comment>
<comment type="similarity">
    <text evidence="7">Belongs to the cytochrome P450 family.</text>
</comment>
<feature type="chain" id="PRO_0000051905" description="Cytochrome P450 7A1">
    <location>
        <begin position="1"/>
        <end position="503"/>
    </location>
</feature>
<feature type="transmembrane region" description="Helical" evidence="2">
    <location>
        <begin position="4"/>
        <end position="24"/>
    </location>
</feature>
<feature type="binding site" description="axial binding residue" evidence="1">
    <location>
        <position position="444"/>
    </location>
    <ligand>
        <name>heme</name>
        <dbReference type="ChEBI" id="CHEBI:30413"/>
    </ligand>
    <ligandPart>
        <name>Fe</name>
        <dbReference type="ChEBI" id="CHEBI:18248"/>
    </ligandPart>
</feature>
<feature type="sequence conflict" description="In Ref. 5; AAA41042." evidence="7" ref="5">
    <original>T</original>
    <variation>S</variation>
    <location>
        <position position="371"/>
    </location>
</feature>
<protein>
    <recommendedName>
        <fullName evidence="1">Cytochrome P450 7A1</fullName>
    </recommendedName>
    <alternativeName>
        <fullName evidence="1">24-hydroxycholesterol 7-alpha-hydroxylase</fullName>
        <ecNumber evidence="1">1.14.14.26</ecNumber>
    </alternativeName>
    <alternativeName>
        <fullName>CYPVII</fullName>
    </alternativeName>
    <alternativeName>
        <fullName evidence="6">Cholesterol 7-alpha-hydroxylase</fullName>
    </alternativeName>
    <alternativeName>
        <fullName>Cholesterol 7-alpha-monooxygenase</fullName>
        <ecNumber evidence="4 5">1.14.14.23</ecNumber>
    </alternativeName>
</protein>
<gene>
    <name type="primary">Cyp7a1</name>
    <name type="synonym">Cyp7</name>
</gene>
<reference key="1">
    <citation type="journal article" date="1990" name="J. Biol. Chem.">
        <title>Regulation of cholesterol 7 alpha-hydroxylase in the liver. Cloning, sequencing, and regulation of cholesterol 7 alpha-hydroxylase mRNA.</title>
        <authorList>
            <person name="Li Y.C."/>
            <person name="Wang D.P."/>
            <person name="Chiang J.Y.L."/>
        </authorList>
    </citation>
    <scope>NUCLEOTIDE SEQUENCE [MRNA]</scope>
    <scope>CATALYTIC ACTIVITY</scope>
    <scope>FUNCTION</scope>
    <scope>INDUCTION</scope>
    <scope>SUBCELLULAR LOCATION</scope>
    <scope>TISSUE SPECIFICITY</scope>
    <source>
        <strain>Sprague-Dawley</strain>
        <tissue>Liver</tissue>
    </source>
</reference>
<reference key="2">
    <citation type="journal article" date="1990" name="J. Biol. Chem.">
        <title>Cloning and regulation of cholesterol 7 alpha-hydroxylase, the rate-limiting enzyme in bile acid biosynthesis.</title>
        <authorList>
            <person name="Jelinek D.F."/>
            <person name="Andersson S."/>
            <person name="Slaughter C.A."/>
            <person name="Russell D.W."/>
        </authorList>
    </citation>
    <scope>NUCLEOTIDE SEQUENCE [MRNA]</scope>
    <scope>PARTIAL PROTEIN SEQUENCE</scope>
    <scope>CATALYTIC ACTIVITY</scope>
    <scope>FUNCTION</scope>
    <scope>INDUCTION</scope>
    <scope>TISSUE SPECIFICITY</scope>
    <source>
        <strain>Sprague-Dawley</strain>
    </source>
</reference>
<reference key="3">
    <citation type="journal article" date="1989" name="FEBS Lett.">
        <title>Molecular cloning of cDNA for cholesterol 7 alpha-hydroxylase from rat liver microsomes. Nucleotide sequence and expression.</title>
        <authorList>
            <person name="Noshiro M."/>
            <person name="Nishimoto M."/>
            <person name="Morohashi K."/>
            <person name="Okuda K."/>
        </authorList>
    </citation>
    <scope>NUCLEOTIDE SEQUENCE [MRNA]</scope>
</reference>
<reference key="4">
    <citation type="journal article" date="1990" name="J. Biol. Chem.">
        <title>Rat liver cholesterol 7 alpha-hydroxylase. Pretranslational regulation for circadian rhythm.</title>
        <authorList>
            <person name="Noshiro M."/>
            <person name="Nishimoto M."/>
            <person name="Okuda K."/>
        </authorList>
    </citation>
    <scope>NUCLEOTIDE SEQUENCE [MRNA]</scope>
    <source>
        <tissue>Liver</tissue>
    </source>
</reference>
<reference key="5">
    <citation type="journal article" date="1991" name="J. Biol. Chem.">
        <title>Structural analysis of the gene encoding rat cholesterol alpha-hydroxylase, the key enzyme for bile acid biosynthesis.</title>
        <authorList>
            <person name="Nishimoto M."/>
            <person name="Gotoh O."/>
            <person name="Okuda K."/>
            <person name="Noshiro M."/>
        </authorList>
    </citation>
    <scope>NUCLEOTIDE SEQUENCE [GENOMIC DNA]</scope>
</reference>
<reference key="6">
    <citation type="journal article" date="1994" name="J. Biol. Chem.">
        <title>Identification and characterization of a putative bile acid-responsive element in cholesterol 7 alpha-hydroxylase gene promoter.</title>
        <authorList>
            <person name="Chiang J.Y."/>
            <person name="Stroup D."/>
        </authorList>
    </citation>
    <scope>NUCLEOTIDE SEQUENCE [GENOMIC DNA] OF 1-325</scope>
    <source>
        <strain>Sprague-Dawley</strain>
    </source>
</reference>
<reference key="7">
    <citation type="journal article" date="1990" name="Biochemistry">
        <title>Structure of the rat gene encoding cholesterol 7 alpha-hydroxylase.</title>
        <authorList>
            <person name="Jelinek D.F."/>
            <person name="Russell D.W."/>
        </authorList>
    </citation>
    <scope>NUCLEOTIDE SEQUENCE [GENOMIC DNA] OF 1-27</scope>
    <source>
        <strain>Sprague-Dawley</strain>
    </source>
</reference>
<reference key="8">
    <citation type="journal article" date="1992" name="Biochim. Biophys. Acta">
        <title>Cloning and 5'-flanking sequence of a rat cholesterol 7 alpha-hydroxylase gene.</title>
        <authorList>
            <person name="Chiang J.Y."/>
            <person name="Yang T.P."/>
            <person name="Wang D.P."/>
        </authorList>
    </citation>
    <scope>NUCLEOTIDE SEQUENCE [GENOMIC DNA] OF 1-26</scope>
</reference>
<reference key="9">
    <citation type="journal article" date="2001" name="J. Biol. Chem.">
        <title>Down-regulation of cholesterol 7alpha-hydroxylase (CYP7A1) gene expression by bile acids in primary rat hepatocytes is mediated by the c-Jun N-terminal kinase pathway.</title>
        <authorList>
            <person name="Gupta S."/>
            <person name="Stravitz R.T."/>
            <person name="Dent P."/>
            <person name="Hylemon P.B."/>
        </authorList>
    </citation>
    <scope>INDUCTION</scope>
</reference>